<keyword id="KW-0963">Cytoplasm</keyword>
<keyword id="KW-0342">GTP-binding</keyword>
<keyword id="KW-0436">Ligase</keyword>
<keyword id="KW-0460">Magnesium</keyword>
<keyword id="KW-0479">Metal-binding</keyword>
<keyword id="KW-0547">Nucleotide-binding</keyword>
<keyword id="KW-0658">Purine biosynthesis</keyword>
<dbReference type="EC" id="6.3.4.4" evidence="1"/>
<dbReference type="EMBL" id="CP000308">
    <property type="protein sequence ID" value="ABG15867.1"/>
    <property type="molecule type" value="Genomic_DNA"/>
</dbReference>
<dbReference type="RefSeq" id="WP_002209157.1">
    <property type="nucleotide sequence ID" value="NZ_CP009906.1"/>
</dbReference>
<dbReference type="SMR" id="Q1C105"/>
<dbReference type="KEGG" id="ypa:YPA_3906"/>
<dbReference type="UniPathway" id="UPA00075">
    <property type="reaction ID" value="UER00335"/>
</dbReference>
<dbReference type="Proteomes" id="UP000001971">
    <property type="component" value="Chromosome"/>
</dbReference>
<dbReference type="GO" id="GO:0005737">
    <property type="term" value="C:cytoplasm"/>
    <property type="evidence" value="ECO:0007669"/>
    <property type="project" value="UniProtKB-SubCell"/>
</dbReference>
<dbReference type="GO" id="GO:0004019">
    <property type="term" value="F:adenylosuccinate synthase activity"/>
    <property type="evidence" value="ECO:0007669"/>
    <property type="project" value="UniProtKB-UniRule"/>
</dbReference>
<dbReference type="GO" id="GO:0005525">
    <property type="term" value="F:GTP binding"/>
    <property type="evidence" value="ECO:0007669"/>
    <property type="project" value="UniProtKB-UniRule"/>
</dbReference>
<dbReference type="GO" id="GO:0000287">
    <property type="term" value="F:magnesium ion binding"/>
    <property type="evidence" value="ECO:0007669"/>
    <property type="project" value="UniProtKB-UniRule"/>
</dbReference>
<dbReference type="GO" id="GO:0044208">
    <property type="term" value="P:'de novo' AMP biosynthetic process"/>
    <property type="evidence" value="ECO:0007669"/>
    <property type="project" value="UniProtKB-UniRule"/>
</dbReference>
<dbReference type="GO" id="GO:0046040">
    <property type="term" value="P:IMP metabolic process"/>
    <property type="evidence" value="ECO:0007669"/>
    <property type="project" value="TreeGrafter"/>
</dbReference>
<dbReference type="CDD" id="cd03108">
    <property type="entry name" value="AdSS"/>
    <property type="match status" value="1"/>
</dbReference>
<dbReference type="FunFam" id="1.10.300.10:FF:000001">
    <property type="entry name" value="Adenylosuccinate synthetase"/>
    <property type="match status" value="1"/>
</dbReference>
<dbReference type="FunFam" id="3.90.170.10:FF:000001">
    <property type="entry name" value="Adenylosuccinate synthetase"/>
    <property type="match status" value="1"/>
</dbReference>
<dbReference type="Gene3D" id="3.40.440.10">
    <property type="entry name" value="Adenylosuccinate Synthetase, subunit A, domain 1"/>
    <property type="match status" value="1"/>
</dbReference>
<dbReference type="Gene3D" id="1.10.300.10">
    <property type="entry name" value="Adenylosuccinate Synthetase, subunit A, domain 2"/>
    <property type="match status" value="1"/>
</dbReference>
<dbReference type="Gene3D" id="3.90.170.10">
    <property type="entry name" value="Adenylosuccinate Synthetase, subunit A, domain 3"/>
    <property type="match status" value="1"/>
</dbReference>
<dbReference type="HAMAP" id="MF_00011">
    <property type="entry name" value="Adenylosucc_synth"/>
    <property type="match status" value="1"/>
</dbReference>
<dbReference type="InterPro" id="IPR018220">
    <property type="entry name" value="Adenylosuccin_syn_GTP-bd"/>
</dbReference>
<dbReference type="InterPro" id="IPR033128">
    <property type="entry name" value="Adenylosuccin_syn_Lys_AS"/>
</dbReference>
<dbReference type="InterPro" id="IPR042109">
    <property type="entry name" value="Adenylosuccinate_synth_dom1"/>
</dbReference>
<dbReference type="InterPro" id="IPR042110">
    <property type="entry name" value="Adenylosuccinate_synth_dom2"/>
</dbReference>
<dbReference type="InterPro" id="IPR042111">
    <property type="entry name" value="Adenylosuccinate_synth_dom3"/>
</dbReference>
<dbReference type="InterPro" id="IPR001114">
    <property type="entry name" value="Adenylosuccinate_synthetase"/>
</dbReference>
<dbReference type="InterPro" id="IPR027417">
    <property type="entry name" value="P-loop_NTPase"/>
</dbReference>
<dbReference type="NCBIfam" id="NF002223">
    <property type="entry name" value="PRK01117.1"/>
    <property type="match status" value="1"/>
</dbReference>
<dbReference type="NCBIfam" id="TIGR00184">
    <property type="entry name" value="purA"/>
    <property type="match status" value="1"/>
</dbReference>
<dbReference type="PANTHER" id="PTHR11846">
    <property type="entry name" value="ADENYLOSUCCINATE SYNTHETASE"/>
    <property type="match status" value="1"/>
</dbReference>
<dbReference type="PANTHER" id="PTHR11846:SF0">
    <property type="entry name" value="ADENYLOSUCCINATE SYNTHETASE"/>
    <property type="match status" value="1"/>
</dbReference>
<dbReference type="Pfam" id="PF00709">
    <property type="entry name" value="Adenylsucc_synt"/>
    <property type="match status" value="1"/>
</dbReference>
<dbReference type="SMART" id="SM00788">
    <property type="entry name" value="Adenylsucc_synt"/>
    <property type="match status" value="1"/>
</dbReference>
<dbReference type="SUPFAM" id="SSF52540">
    <property type="entry name" value="P-loop containing nucleoside triphosphate hydrolases"/>
    <property type="match status" value="1"/>
</dbReference>
<dbReference type="PROSITE" id="PS01266">
    <property type="entry name" value="ADENYLOSUCCIN_SYN_1"/>
    <property type="match status" value="1"/>
</dbReference>
<dbReference type="PROSITE" id="PS00513">
    <property type="entry name" value="ADENYLOSUCCIN_SYN_2"/>
    <property type="match status" value="1"/>
</dbReference>
<accession>Q1C105</accession>
<reference key="1">
    <citation type="journal article" date="2006" name="J. Bacteriol.">
        <title>Complete genome sequence of Yersinia pestis strains Antiqua and Nepal516: evidence of gene reduction in an emerging pathogen.</title>
        <authorList>
            <person name="Chain P.S.G."/>
            <person name="Hu P."/>
            <person name="Malfatti S.A."/>
            <person name="Radnedge L."/>
            <person name="Larimer F."/>
            <person name="Vergez L.M."/>
            <person name="Worsham P."/>
            <person name="Chu M.C."/>
            <person name="Andersen G.L."/>
        </authorList>
    </citation>
    <scope>NUCLEOTIDE SEQUENCE [LARGE SCALE GENOMIC DNA]</scope>
    <source>
        <strain>Antiqua</strain>
    </source>
</reference>
<gene>
    <name evidence="1" type="primary">purA</name>
    <name type="ordered locus">YPA_3906</name>
</gene>
<protein>
    <recommendedName>
        <fullName evidence="1">Adenylosuccinate synthetase</fullName>
        <shortName evidence="1">AMPSase</shortName>
        <shortName evidence="1">AdSS</shortName>
        <ecNumber evidence="1">6.3.4.4</ecNumber>
    </recommendedName>
    <alternativeName>
        <fullName evidence="1">IMP--aspartate ligase</fullName>
    </alternativeName>
</protein>
<feature type="chain" id="PRO_1000000947" description="Adenylosuccinate synthetase">
    <location>
        <begin position="1"/>
        <end position="432"/>
    </location>
</feature>
<feature type="active site" description="Proton acceptor" evidence="1">
    <location>
        <position position="14"/>
    </location>
</feature>
<feature type="active site" description="Proton donor" evidence="1">
    <location>
        <position position="42"/>
    </location>
</feature>
<feature type="binding site" evidence="1">
    <location>
        <begin position="13"/>
        <end position="19"/>
    </location>
    <ligand>
        <name>GTP</name>
        <dbReference type="ChEBI" id="CHEBI:37565"/>
    </ligand>
</feature>
<feature type="binding site" description="in other chain" evidence="1">
    <location>
        <begin position="14"/>
        <end position="17"/>
    </location>
    <ligand>
        <name>IMP</name>
        <dbReference type="ChEBI" id="CHEBI:58053"/>
        <note>ligand shared between dimeric partners</note>
    </ligand>
</feature>
<feature type="binding site" evidence="1">
    <location>
        <position position="14"/>
    </location>
    <ligand>
        <name>Mg(2+)</name>
        <dbReference type="ChEBI" id="CHEBI:18420"/>
    </ligand>
</feature>
<feature type="binding site" description="in other chain" evidence="1">
    <location>
        <begin position="39"/>
        <end position="42"/>
    </location>
    <ligand>
        <name>IMP</name>
        <dbReference type="ChEBI" id="CHEBI:58053"/>
        <note>ligand shared between dimeric partners</note>
    </ligand>
</feature>
<feature type="binding site" evidence="1">
    <location>
        <begin position="41"/>
        <end position="43"/>
    </location>
    <ligand>
        <name>GTP</name>
        <dbReference type="ChEBI" id="CHEBI:37565"/>
    </ligand>
</feature>
<feature type="binding site" evidence="1">
    <location>
        <position position="41"/>
    </location>
    <ligand>
        <name>Mg(2+)</name>
        <dbReference type="ChEBI" id="CHEBI:18420"/>
    </ligand>
</feature>
<feature type="binding site" description="in other chain" evidence="1">
    <location>
        <position position="130"/>
    </location>
    <ligand>
        <name>IMP</name>
        <dbReference type="ChEBI" id="CHEBI:58053"/>
        <note>ligand shared between dimeric partners</note>
    </ligand>
</feature>
<feature type="binding site" evidence="1">
    <location>
        <position position="144"/>
    </location>
    <ligand>
        <name>IMP</name>
        <dbReference type="ChEBI" id="CHEBI:58053"/>
        <note>ligand shared between dimeric partners</note>
    </ligand>
</feature>
<feature type="binding site" description="in other chain" evidence="1">
    <location>
        <position position="225"/>
    </location>
    <ligand>
        <name>IMP</name>
        <dbReference type="ChEBI" id="CHEBI:58053"/>
        <note>ligand shared between dimeric partners</note>
    </ligand>
</feature>
<feature type="binding site" description="in other chain" evidence="1">
    <location>
        <position position="240"/>
    </location>
    <ligand>
        <name>IMP</name>
        <dbReference type="ChEBI" id="CHEBI:58053"/>
        <note>ligand shared between dimeric partners</note>
    </ligand>
</feature>
<feature type="binding site" evidence="1">
    <location>
        <begin position="300"/>
        <end position="306"/>
    </location>
    <ligand>
        <name>substrate</name>
    </ligand>
</feature>
<feature type="binding site" description="in other chain" evidence="1">
    <location>
        <position position="304"/>
    </location>
    <ligand>
        <name>IMP</name>
        <dbReference type="ChEBI" id="CHEBI:58053"/>
        <note>ligand shared between dimeric partners</note>
    </ligand>
</feature>
<feature type="binding site" evidence="1">
    <location>
        <position position="306"/>
    </location>
    <ligand>
        <name>GTP</name>
        <dbReference type="ChEBI" id="CHEBI:37565"/>
    </ligand>
</feature>
<feature type="binding site" evidence="1">
    <location>
        <begin position="332"/>
        <end position="334"/>
    </location>
    <ligand>
        <name>GTP</name>
        <dbReference type="ChEBI" id="CHEBI:37565"/>
    </ligand>
</feature>
<feature type="binding site" evidence="1">
    <location>
        <begin position="415"/>
        <end position="417"/>
    </location>
    <ligand>
        <name>GTP</name>
        <dbReference type="ChEBI" id="CHEBI:37565"/>
    </ligand>
</feature>
<evidence type="ECO:0000255" key="1">
    <source>
        <dbReference type="HAMAP-Rule" id="MF_00011"/>
    </source>
</evidence>
<comment type="function">
    <text evidence="1">Plays an important role in the de novo pathway of purine nucleotide biosynthesis. Catalyzes the first committed step in the biosynthesis of AMP from IMP.</text>
</comment>
<comment type="catalytic activity">
    <reaction evidence="1">
        <text>IMP + L-aspartate + GTP = N(6)-(1,2-dicarboxyethyl)-AMP + GDP + phosphate + 2 H(+)</text>
        <dbReference type="Rhea" id="RHEA:15753"/>
        <dbReference type="ChEBI" id="CHEBI:15378"/>
        <dbReference type="ChEBI" id="CHEBI:29991"/>
        <dbReference type="ChEBI" id="CHEBI:37565"/>
        <dbReference type="ChEBI" id="CHEBI:43474"/>
        <dbReference type="ChEBI" id="CHEBI:57567"/>
        <dbReference type="ChEBI" id="CHEBI:58053"/>
        <dbReference type="ChEBI" id="CHEBI:58189"/>
        <dbReference type="EC" id="6.3.4.4"/>
    </reaction>
</comment>
<comment type="cofactor">
    <cofactor evidence="1">
        <name>Mg(2+)</name>
        <dbReference type="ChEBI" id="CHEBI:18420"/>
    </cofactor>
    <text evidence="1">Binds 1 Mg(2+) ion per subunit.</text>
</comment>
<comment type="pathway">
    <text evidence="1">Purine metabolism; AMP biosynthesis via de novo pathway; AMP from IMP: step 1/2.</text>
</comment>
<comment type="subunit">
    <text evidence="1">Homodimer.</text>
</comment>
<comment type="subcellular location">
    <subcellularLocation>
        <location evidence="1">Cytoplasm</location>
    </subcellularLocation>
</comment>
<comment type="similarity">
    <text evidence="1">Belongs to the adenylosuccinate synthetase family.</text>
</comment>
<organism>
    <name type="scientific">Yersinia pestis bv. Antiqua (strain Antiqua)</name>
    <dbReference type="NCBI Taxonomy" id="360102"/>
    <lineage>
        <taxon>Bacteria</taxon>
        <taxon>Pseudomonadati</taxon>
        <taxon>Pseudomonadota</taxon>
        <taxon>Gammaproteobacteria</taxon>
        <taxon>Enterobacterales</taxon>
        <taxon>Yersiniaceae</taxon>
        <taxon>Yersinia</taxon>
    </lineage>
</organism>
<sequence length="432" mass="47278">MGKNVVVLGTQWGDEGKGKVVDLLTERAKYVVRYQGGHNAGHTLVINGEKTVLHLIPSGILRENVISIIGNGVVLAPDALMKEMTELEARGVPVRERLLLSEACPLILPYHVALDNAREKARGAKAIGTTGRGIGPAYEDKVARRGLRVSDLFNKETFAIKLKEIVEYHNFQLVHYYKEAAVDYQKVLDDVLAIADILTAMVVDVSELLDNARKQGELIMFEGAQGTLLDIDHGTYPYVTSSNTTAGGVATGSGLGPRYVDYVLGIVKAYSTRVGAGPFPTELNDETGEFLRKQGNEYGATTGRSRRTGWLDIVAVRRAVQINSLSGFCMTKLDVLDGLKEVKLCVGYRMPDGREVDTTPLAAEGWEGIEPIYETMPGWSETTFGVKEHSKLPQAALNYIQRVEELTGVPIDIISTGPDRDETMILRDPFDA</sequence>
<name>PURA_YERPA</name>
<proteinExistence type="inferred from homology"/>